<proteinExistence type="evidence at transcript level"/>
<name>PRS6B_SOLTU</name>
<keyword id="KW-0067">ATP-binding</keyword>
<keyword id="KW-0175">Coiled coil</keyword>
<keyword id="KW-0963">Cytoplasm</keyword>
<keyword id="KW-0547">Nucleotide-binding</keyword>
<keyword id="KW-0539">Nucleus</keyword>
<keyword id="KW-0647">Proteasome</keyword>
<keyword id="KW-1185">Reference proteome</keyword>
<organism>
    <name type="scientific">Solanum tuberosum</name>
    <name type="common">Potato</name>
    <dbReference type="NCBI Taxonomy" id="4113"/>
    <lineage>
        <taxon>Eukaryota</taxon>
        <taxon>Viridiplantae</taxon>
        <taxon>Streptophyta</taxon>
        <taxon>Embryophyta</taxon>
        <taxon>Tracheophyta</taxon>
        <taxon>Spermatophyta</taxon>
        <taxon>Magnoliopsida</taxon>
        <taxon>eudicotyledons</taxon>
        <taxon>Gunneridae</taxon>
        <taxon>Pentapetalae</taxon>
        <taxon>asterids</taxon>
        <taxon>lamiids</taxon>
        <taxon>Solanales</taxon>
        <taxon>Solanaceae</taxon>
        <taxon>Solanoideae</taxon>
        <taxon>Solaneae</taxon>
        <taxon>Solanum</taxon>
    </lineage>
</organism>
<comment type="function">
    <text evidence="1">The 26S proteasome is involved in the ATP-dependent degradation of ubiquitinated proteins. The regulatory (or ATPase) complex confers ATP dependency and substrate specificity to the 26S complex (By similarity).</text>
</comment>
<comment type="subcellular location">
    <subcellularLocation>
        <location evidence="4">Cytoplasm</location>
    </subcellularLocation>
    <subcellularLocation>
        <location evidence="4">Nucleus</location>
    </subcellularLocation>
</comment>
<comment type="similarity">
    <text evidence="4">Belongs to the AAA ATPase family.</text>
</comment>
<protein>
    <recommendedName>
        <fullName>26S proteasome regulatory subunit 6B homolog</fullName>
    </recommendedName>
</protein>
<reference key="1">
    <citation type="online journal article" date="1996" name="Plant Gene Register">
        <title>Isolation of an AAA superfamily cDNA clone from potato.</title>
        <authorList>
            <person name="Hart J.K."/>
            <person name="Hannapel D.J."/>
        </authorList>
        <locator>PGR96-039</locator>
    </citation>
    <scope>NUCLEOTIDE SEQUENCE [MRNA]</scope>
    <source>
        <strain>cv. Superior</strain>
    </source>
</reference>
<dbReference type="EMBL" id="U43398">
    <property type="protein sequence ID" value="AAB67835.1"/>
    <property type="molecule type" value="mRNA"/>
</dbReference>
<dbReference type="PIR" id="T07110">
    <property type="entry name" value="T07110"/>
</dbReference>
<dbReference type="RefSeq" id="NP_001275060.1">
    <property type="nucleotide sequence ID" value="NM_001288131.1"/>
</dbReference>
<dbReference type="SMR" id="P54778"/>
<dbReference type="FunCoup" id="P54778">
    <property type="interactions" value="3592"/>
</dbReference>
<dbReference type="STRING" id="4113.P54778"/>
<dbReference type="PaxDb" id="4113-PGSC0003DMT400053010"/>
<dbReference type="ProMEX" id="P54778"/>
<dbReference type="GeneID" id="102577768"/>
<dbReference type="KEGG" id="sot:102577768"/>
<dbReference type="eggNOG" id="KOG0727">
    <property type="taxonomic scope" value="Eukaryota"/>
</dbReference>
<dbReference type="InParanoid" id="P54778"/>
<dbReference type="OrthoDB" id="10255768at2759"/>
<dbReference type="Proteomes" id="UP000011115">
    <property type="component" value="Unassembled WGS sequence"/>
</dbReference>
<dbReference type="ExpressionAtlas" id="P54778">
    <property type="expression patterns" value="baseline"/>
</dbReference>
<dbReference type="GO" id="GO:0005737">
    <property type="term" value="C:cytoplasm"/>
    <property type="evidence" value="ECO:0007669"/>
    <property type="project" value="UniProtKB-SubCell"/>
</dbReference>
<dbReference type="GO" id="GO:0005634">
    <property type="term" value="C:nucleus"/>
    <property type="evidence" value="ECO:0007669"/>
    <property type="project" value="UniProtKB-SubCell"/>
</dbReference>
<dbReference type="GO" id="GO:0008540">
    <property type="term" value="C:proteasome regulatory particle, base subcomplex"/>
    <property type="evidence" value="ECO:0000318"/>
    <property type="project" value="GO_Central"/>
</dbReference>
<dbReference type="GO" id="GO:0005524">
    <property type="term" value="F:ATP binding"/>
    <property type="evidence" value="ECO:0007669"/>
    <property type="project" value="UniProtKB-KW"/>
</dbReference>
<dbReference type="GO" id="GO:0016887">
    <property type="term" value="F:ATP hydrolysis activity"/>
    <property type="evidence" value="ECO:0007669"/>
    <property type="project" value="InterPro"/>
</dbReference>
<dbReference type="GO" id="GO:0036402">
    <property type="term" value="F:proteasome-activating activity"/>
    <property type="evidence" value="ECO:0000318"/>
    <property type="project" value="GO_Central"/>
</dbReference>
<dbReference type="GO" id="GO:0043161">
    <property type="term" value="P:proteasome-mediated ubiquitin-dependent protein catabolic process"/>
    <property type="evidence" value="ECO:0000318"/>
    <property type="project" value="GO_Central"/>
</dbReference>
<dbReference type="CDD" id="cd19502">
    <property type="entry name" value="RecA-like_PAN_like"/>
    <property type="match status" value="1"/>
</dbReference>
<dbReference type="FunFam" id="1.10.8.60:FF:000018">
    <property type="entry name" value="26S protease regulatory subunit 6B"/>
    <property type="match status" value="1"/>
</dbReference>
<dbReference type="FunFam" id="2.40.50.140:FF:000046">
    <property type="entry name" value="26S protease regulatory subunit 6B"/>
    <property type="match status" value="1"/>
</dbReference>
<dbReference type="FunFam" id="3.40.50.300:FF:000033">
    <property type="entry name" value="26S protease regulatory subunit 6B"/>
    <property type="match status" value="1"/>
</dbReference>
<dbReference type="Gene3D" id="1.10.8.60">
    <property type="match status" value="1"/>
</dbReference>
<dbReference type="Gene3D" id="2.40.50.140">
    <property type="entry name" value="Nucleic acid-binding proteins"/>
    <property type="match status" value="1"/>
</dbReference>
<dbReference type="Gene3D" id="3.40.50.300">
    <property type="entry name" value="P-loop containing nucleotide triphosphate hydrolases"/>
    <property type="match status" value="1"/>
</dbReference>
<dbReference type="InterPro" id="IPR050221">
    <property type="entry name" value="26S_Proteasome_ATPase"/>
</dbReference>
<dbReference type="InterPro" id="IPR003593">
    <property type="entry name" value="AAA+_ATPase"/>
</dbReference>
<dbReference type="InterPro" id="IPR041569">
    <property type="entry name" value="AAA_lid_3"/>
</dbReference>
<dbReference type="InterPro" id="IPR003959">
    <property type="entry name" value="ATPase_AAA_core"/>
</dbReference>
<dbReference type="InterPro" id="IPR003960">
    <property type="entry name" value="ATPase_AAA_CS"/>
</dbReference>
<dbReference type="InterPro" id="IPR012340">
    <property type="entry name" value="NA-bd_OB-fold"/>
</dbReference>
<dbReference type="InterPro" id="IPR027417">
    <property type="entry name" value="P-loop_NTPase"/>
</dbReference>
<dbReference type="InterPro" id="IPR032501">
    <property type="entry name" value="Prot_ATP_ID_OB_2nd"/>
</dbReference>
<dbReference type="PANTHER" id="PTHR23073">
    <property type="entry name" value="26S PROTEASOME REGULATORY SUBUNIT"/>
    <property type="match status" value="1"/>
</dbReference>
<dbReference type="Pfam" id="PF00004">
    <property type="entry name" value="AAA"/>
    <property type="match status" value="1"/>
</dbReference>
<dbReference type="Pfam" id="PF17862">
    <property type="entry name" value="AAA_lid_3"/>
    <property type="match status" value="1"/>
</dbReference>
<dbReference type="Pfam" id="PF16450">
    <property type="entry name" value="Prot_ATP_ID_OB_C"/>
    <property type="match status" value="1"/>
</dbReference>
<dbReference type="SMART" id="SM00382">
    <property type="entry name" value="AAA"/>
    <property type="match status" value="1"/>
</dbReference>
<dbReference type="SUPFAM" id="SSF52540">
    <property type="entry name" value="P-loop containing nucleoside triphosphate hydrolases"/>
    <property type="match status" value="1"/>
</dbReference>
<dbReference type="PROSITE" id="PS00674">
    <property type="entry name" value="AAA"/>
    <property type="match status" value="1"/>
</dbReference>
<evidence type="ECO:0000250" key="1"/>
<evidence type="ECO:0000255" key="2"/>
<evidence type="ECO:0000256" key="3">
    <source>
        <dbReference type="SAM" id="MobiDB-lite"/>
    </source>
</evidence>
<evidence type="ECO:0000305" key="4"/>
<feature type="chain" id="PRO_0000084693" description="26S proteasome regulatory subunit 6B homolog">
    <location>
        <begin position="1"/>
        <end position="413"/>
    </location>
</feature>
<feature type="region of interest" description="Disordered" evidence="3">
    <location>
        <begin position="1"/>
        <end position="30"/>
    </location>
</feature>
<feature type="coiled-coil region" evidence="2">
    <location>
        <begin position="32"/>
        <end position="80"/>
    </location>
</feature>
<feature type="binding site" evidence="2">
    <location>
        <begin position="201"/>
        <end position="208"/>
    </location>
    <ligand>
        <name>ATP</name>
        <dbReference type="ChEBI" id="CHEBI:30616"/>
    </ligand>
</feature>
<sequence length="413" mass="46532">MATAMVLDPKPAEKLPATRPETSITDVPSDGEDDLYARLKSLQRQLEFIEIQEEYVKDELKNLRREHLRAQEEVKRIQSVPLVIGQFMEMIDQNNAIVGSTTGSNYYVRILSTINRELLKPSASVGLDRHSNALVDVLPPEADSSISLLSQSEKPDVTYNDIGGCDIQKQEIREAVELPLTHHELYKQIGIDPPRGVLLYGPPGTGKTMLAKAVAHHTTAAFIRVVGSEFVQKYLGEGPRMVRDVFRLAKENAPAIIFIDEVDAIATARFDAQTGADREVQRILMELLNQMDGFDQTVNVKVIMATNRADTLDPALLRPGRLDRKIEFPLPDRRQKRLVFQVCTAKMNLGDEVDLEDYVSRPDKISAAEITAICQEAGMHAVRKNRYVILPKDFEKGYRTNVKKPDTDFEFYK</sequence>
<accession>P54778</accession>